<organism>
    <name type="scientific">Staphylococcus epidermidis (strain ATCC 35984 / DSM 28319 / BCRC 17069 / CCUG 31568 / BM 3577 / RP62A)</name>
    <dbReference type="NCBI Taxonomy" id="176279"/>
    <lineage>
        <taxon>Bacteria</taxon>
        <taxon>Bacillati</taxon>
        <taxon>Bacillota</taxon>
        <taxon>Bacilli</taxon>
        <taxon>Bacillales</taxon>
        <taxon>Staphylococcaceae</taxon>
        <taxon>Staphylococcus</taxon>
    </lineage>
</organism>
<keyword id="KW-0311">Gluconate utilization</keyword>
<keyword id="KW-0521">NADP</keyword>
<keyword id="KW-0560">Oxidoreductase</keyword>
<keyword id="KW-0570">Pentose shunt</keyword>
<keyword id="KW-1185">Reference proteome</keyword>
<accession>Q5HP42</accession>
<protein>
    <recommendedName>
        <fullName>6-phosphogluconate dehydrogenase, decarboxylating</fullName>
        <ecNumber>1.1.1.44</ecNumber>
    </recommendedName>
</protein>
<gene>
    <name type="primary">gnd</name>
    <name type="ordered locus">SERP1071</name>
</gene>
<evidence type="ECO:0000250" key="1"/>
<evidence type="ECO:0000305" key="2"/>
<comment type="function">
    <text evidence="1">Catalyzes the oxidative decarboxylation of 6-phosphogluconate to ribulose 5-phosphate and CO(2), with concomitant reduction of NADP to NADPH.</text>
</comment>
<comment type="catalytic activity">
    <reaction>
        <text>6-phospho-D-gluconate + NADP(+) = D-ribulose 5-phosphate + CO2 + NADPH</text>
        <dbReference type="Rhea" id="RHEA:10116"/>
        <dbReference type="ChEBI" id="CHEBI:16526"/>
        <dbReference type="ChEBI" id="CHEBI:57783"/>
        <dbReference type="ChEBI" id="CHEBI:58121"/>
        <dbReference type="ChEBI" id="CHEBI:58349"/>
        <dbReference type="ChEBI" id="CHEBI:58759"/>
        <dbReference type="EC" id="1.1.1.44"/>
    </reaction>
</comment>
<comment type="pathway">
    <text>Carbohydrate degradation; pentose phosphate pathway; D-ribulose 5-phosphate from D-glucose 6-phosphate (oxidative stage): step 3/3.</text>
</comment>
<comment type="subunit">
    <text evidence="1">Homodimer.</text>
</comment>
<comment type="similarity">
    <text evidence="2">Belongs to the 6-phosphogluconate dehydrogenase family.</text>
</comment>
<proteinExistence type="inferred from homology"/>
<feature type="chain" id="PRO_0000090059" description="6-phosphogluconate dehydrogenase, decarboxylating">
    <location>
        <begin position="1"/>
        <end position="468"/>
    </location>
</feature>
<feature type="active site" description="Proton acceptor" evidence="1">
    <location>
        <position position="182"/>
    </location>
</feature>
<feature type="active site" description="Proton donor" evidence="1">
    <location>
        <position position="189"/>
    </location>
</feature>
<feature type="binding site" evidence="1">
    <location>
        <begin position="9"/>
        <end position="14"/>
    </location>
    <ligand>
        <name>NADP(+)</name>
        <dbReference type="ChEBI" id="CHEBI:58349"/>
    </ligand>
</feature>
<feature type="binding site" evidence="1">
    <location>
        <begin position="32"/>
        <end position="34"/>
    </location>
    <ligand>
        <name>NADP(+)</name>
        <dbReference type="ChEBI" id="CHEBI:58349"/>
    </ligand>
</feature>
<feature type="binding site" evidence="1">
    <location>
        <begin position="73"/>
        <end position="75"/>
    </location>
    <ligand>
        <name>NADP(+)</name>
        <dbReference type="ChEBI" id="CHEBI:58349"/>
    </ligand>
</feature>
<feature type="binding site" evidence="1">
    <location>
        <position position="101"/>
    </location>
    <ligand>
        <name>NADP(+)</name>
        <dbReference type="ChEBI" id="CHEBI:58349"/>
    </ligand>
</feature>
<feature type="binding site" description="in other chain" evidence="1">
    <location>
        <position position="101"/>
    </location>
    <ligand>
        <name>substrate</name>
        <note>ligand shared between dimeric partners</note>
    </ligand>
</feature>
<feature type="binding site" description="in other chain" evidence="1">
    <location>
        <begin position="127"/>
        <end position="129"/>
    </location>
    <ligand>
        <name>substrate</name>
        <note>ligand shared between dimeric partners</note>
    </ligand>
</feature>
<feature type="binding site" description="in other chain" evidence="1">
    <location>
        <begin position="185"/>
        <end position="186"/>
    </location>
    <ligand>
        <name>substrate</name>
        <note>ligand shared between dimeric partners</note>
    </ligand>
</feature>
<feature type="binding site" description="in other chain" evidence="1">
    <location>
        <position position="190"/>
    </location>
    <ligand>
        <name>substrate</name>
        <note>ligand shared between dimeric partners</note>
    </ligand>
</feature>
<feature type="binding site" description="in other chain" evidence="1">
    <location>
        <position position="259"/>
    </location>
    <ligand>
        <name>substrate</name>
        <note>ligand shared between dimeric partners</note>
    </ligand>
</feature>
<feature type="binding site" description="in other chain" evidence="1">
    <location>
        <position position="286"/>
    </location>
    <ligand>
        <name>substrate</name>
        <note>ligand shared between dimeric partners</note>
    </ligand>
</feature>
<feature type="binding site" evidence="1">
    <location>
        <position position="444"/>
    </location>
    <ligand>
        <name>substrate</name>
        <note>ligand shared between dimeric partners</note>
    </ligand>
</feature>
<feature type="binding site" evidence="1">
    <location>
        <position position="450"/>
    </location>
    <ligand>
        <name>substrate</name>
        <note>ligand shared between dimeric partners</note>
    </ligand>
</feature>
<name>6PGD_STAEQ</name>
<reference key="1">
    <citation type="journal article" date="2005" name="J. Bacteriol.">
        <title>Insights on evolution of virulence and resistance from the complete genome analysis of an early methicillin-resistant Staphylococcus aureus strain and a biofilm-producing methicillin-resistant Staphylococcus epidermidis strain.</title>
        <authorList>
            <person name="Gill S.R."/>
            <person name="Fouts D.E."/>
            <person name="Archer G.L."/>
            <person name="Mongodin E.F."/>
            <person name="DeBoy R.T."/>
            <person name="Ravel J."/>
            <person name="Paulsen I.T."/>
            <person name="Kolonay J.F."/>
            <person name="Brinkac L.M."/>
            <person name="Beanan M.J."/>
            <person name="Dodson R.J."/>
            <person name="Daugherty S.C."/>
            <person name="Madupu R."/>
            <person name="Angiuoli S.V."/>
            <person name="Durkin A.S."/>
            <person name="Haft D.H."/>
            <person name="Vamathevan J.J."/>
            <person name="Khouri H."/>
            <person name="Utterback T.R."/>
            <person name="Lee C."/>
            <person name="Dimitrov G."/>
            <person name="Jiang L."/>
            <person name="Qin H."/>
            <person name="Weidman J."/>
            <person name="Tran K."/>
            <person name="Kang K.H."/>
            <person name="Hance I.R."/>
            <person name="Nelson K.E."/>
            <person name="Fraser C.M."/>
        </authorList>
    </citation>
    <scope>NUCLEOTIDE SEQUENCE [LARGE SCALE GENOMIC DNA]</scope>
    <source>
        <strain>ATCC 35984 / DSM 28319 / BCRC 17069 / CCUG 31568 / BM 3577 / RP62A</strain>
    </source>
</reference>
<dbReference type="EC" id="1.1.1.44"/>
<dbReference type="EMBL" id="CP000029">
    <property type="protein sequence ID" value="AAW54437.1"/>
    <property type="molecule type" value="Genomic_DNA"/>
</dbReference>
<dbReference type="SMR" id="Q5HP42"/>
<dbReference type="STRING" id="176279.SERP1071"/>
<dbReference type="KEGG" id="ser:SERP1071"/>
<dbReference type="eggNOG" id="COG0362">
    <property type="taxonomic scope" value="Bacteria"/>
</dbReference>
<dbReference type="HOGENOM" id="CLU_024540_4_2_9"/>
<dbReference type="UniPathway" id="UPA00115">
    <property type="reaction ID" value="UER00410"/>
</dbReference>
<dbReference type="Proteomes" id="UP000000531">
    <property type="component" value="Chromosome"/>
</dbReference>
<dbReference type="GO" id="GO:0050661">
    <property type="term" value="F:NADP binding"/>
    <property type="evidence" value="ECO:0007669"/>
    <property type="project" value="InterPro"/>
</dbReference>
<dbReference type="GO" id="GO:0004616">
    <property type="term" value="F:phosphogluconate dehydrogenase (decarboxylating) activity"/>
    <property type="evidence" value="ECO:0007669"/>
    <property type="project" value="UniProtKB-EC"/>
</dbReference>
<dbReference type="GO" id="GO:0019521">
    <property type="term" value="P:D-gluconate metabolic process"/>
    <property type="evidence" value="ECO:0007669"/>
    <property type="project" value="UniProtKB-KW"/>
</dbReference>
<dbReference type="GO" id="GO:0016054">
    <property type="term" value="P:organic acid catabolic process"/>
    <property type="evidence" value="ECO:0007669"/>
    <property type="project" value="UniProtKB-ARBA"/>
</dbReference>
<dbReference type="GO" id="GO:0006098">
    <property type="term" value="P:pentose-phosphate shunt"/>
    <property type="evidence" value="ECO:0007669"/>
    <property type="project" value="UniProtKB-UniPathway"/>
</dbReference>
<dbReference type="FunFam" id="1.10.1040.10:FF:000002">
    <property type="entry name" value="6-phosphogluconate dehydrogenase, decarboxylating"/>
    <property type="match status" value="1"/>
</dbReference>
<dbReference type="FunFam" id="1.20.5.320:FF:000001">
    <property type="entry name" value="6-phosphogluconate dehydrogenase, decarboxylating"/>
    <property type="match status" value="1"/>
</dbReference>
<dbReference type="FunFam" id="3.40.50.720:FF:000007">
    <property type="entry name" value="6-phosphogluconate dehydrogenase, decarboxylating"/>
    <property type="match status" value="1"/>
</dbReference>
<dbReference type="Gene3D" id="1.20.5.320">
    <property type="entry name" value="6-Phosphogluconate Dehydrogenase, domain 3"/>
    <property type="match status" value="1"/>
</dbReference>
<dbReference type="Gene3D" id="1.10.1040.10">
    <property type="entry name" value="N-(1-d-carboxylethyl)-l-norvaline Dehydrogenase, domain 2"/>
    <property type="match status" value="1"/>
</dbReference>
<dbReference type="Gene3D" id="3.40.50.720">
    <property type="entry name" value="NAD(P)-binding Rossmann-like Domain"/>
    <property type="match status" value="1"/>
</dbReference>
<dbReference type="InterPro" id="IPR008927">
    <property type="entry name" value="6-PGluconate_DH-like_C_sf"/>
</dbReference>
<dbReference type="InterPro" id="IPR013328">
    <property type="entry name" value="6PGD_dom2"/>
</dbReference>
<dbReference type="InterPro" id="IPR006114">
    <property type="entry name" value="6PGDH_C"/>
</dbReference>
<dbReference type="InterPro" id="IPR006113">
    <property type="entry name" value="6PGDH_Gnd/GntZ"/>
</dbReference>
<dbReference type="InterPro" id="IPR006115">
    <property type="entry name" value="6PGDH_NADP-bd"/>
</dbReference>
<dbReference type="InterPro" id="IPR006184">
    <property type="entry name" value="6PGdom_BS"/>
</dbReference>
<dbReference type="InterPro" id="IPR036291">
    <property type="entry name" value="NAD(P)-bd_dom_sf"/>
</dbReference>
<dbReference type="InterPro" id="IPR006183">
    <property type="entry name" value="Pgluconate_DH"/>
</dbReference>
<dbReference type="NCBIfam" id="TIGR00873">
    <property type="entry name" value="gnd"/>
    <property type="match status" value="1"/>
</dbReference>
<dbReference type="NCBIfam" id="NF006765">
    <property type="entry name" value="PRK09287.1"/>
    <property type="match status" value="1"/>
</dbReference>
<dbReference type="PANTHER" id="PTHR11811">
    <property type="entry name" value="6-PHOSPHOGLUCONATE DEHYDROGENASE"/>
    <property type="match status" value="1"/>
</dbReference>
<dbReference type="Pfam" id="PF00393">
    <property type="entry name" value="6PGD"/>
    <property type="match status" value="1"/>
</dbReference>
<dbReference type="Pfam" id="PF03446">
    <property type="entry name" value="NAD_binding_2"/>
    <property type="match status" value="1"/>
</dbReference>
<dbReference type="PIRSF" id="PIRSF000109">
    <property type="entry name" value="6PGD"/>
    <property type="match status" value="1"/>
</dbReference>
<dbReference type="PRINTS" id="PR00076">
    <property type="entry name" value="6PGDHDRGNASE"/>
</dbReference>
<dbReference type="SMART" id="SM01350">
    <property type="entry name" value="6PGD"/>
    <property type="match status" value="1"/>
</dbReference>
<dbReference type="SUPFAM" id="SSF48179">
    <property type="entry name" value="6-phosphogluconate dehydrogenase C-terminal domain-like"/>
    <property type="match status" value="1"/>
</dbReference>
<dbReference type="SUPFAM" id="SSF51735">
    <property type="entry name" value="NAD(P)-binding Rossmann-fold domains"/>
    <property type="match status" value="1"/>
</dbReference>
<dbReference type="PROSITE" id="PS00461">
    <property type="entry name" value="6PGD"/>
    <property type="match status" value="1"/>
</dbReference>
<sequence>MTQQIGVVGLAVMGKNLAWNIESRGYSVSVYNRSRQKTDEMVKESPGREIYPTYSLEEFVESLEKPRKILLMVKAGPATDATIDGLLPLLDDDDILIDGGNTNYQDTIRRNKALAESSINFIGMGVSGGEIGALTGPSLMPGGQKDAYNKVSDILDAIAAKAQDGASCVTYIGPNGAGHYVKMVHNGIEYADMQLIAESYAMMKDLLGMSHKEISQTFKEWNAGELESYLIEITGDIFNKLDDDNEALVEKILDTAGQKGTGKWTSINALELGVPLTIITESVFARFISSIKEERVTASKSLKGPKAHFEGDKKTFLEKIRKALYMSKICSYAQGFAQMRKASEDNEWNLKLGELAMIWREGCIIRAQFLQKIKDAYDNNENLQNLLLDPYFKNIVMEYQDALREVVATSVYNGVPTPGFSASINYYDSYRSEDLPANLIQAQRDYFGAHTYERKDREGIFHTQWVEE</sequence>